<proteinExistence type="inferred from homology"/>
<protein>
    <recommendedName>
        <fullName evidence="1">Methionyl-tRNA formyltransferase</fullName>
        <ecNumber evidence="1">2.1.2.9</ecNumber>
    </recommendedName>
</protein>
<name>FMT_HAEIG</name>
<feature type="chain" id="PRO_1000020074" description="Methionyl-tRNA formyltransferase">
    <location>
        <begin position="1"/>
        <end position="318"/>
    </location>
</feature>
<feature type="binding site" evidence="1">
    <location>
        <begin position="112"/>
        <end position="115"/>
    </location>
    <ligand>
        <name>(6S)-5,6,7,8-tetrahydrofolate</name>
        <dbReference type="ChEBI" id="CHEBI:57453"/>
    </ligand>
</feature>
<keyword id="KW-0648">Protein biosynthesis</keyword>
<keyword id="KW-0808">Transferase</keyword>
<sequence length="318" mass="34866">MKSLNIIFAGTPDFAAQHLQAILNSQHNVIAVYTQPDKPAGRGKKLQASPVKQLAEQNNIPVYQPKSLRKEEAQSELKALNADVMVVVAYGLILPKAVLDAPRLGCLNVHGSILPRWRGAAPIQRSIWAGDVQTGVTIMQMDESLDTGDMLHKVYCDILPTETSTSLYNKLAELATSALIDVLDNLENSKFIAEKQDGSQSNYAEKLSKEEAQLDWSLPAMQLERNIRAFNPWPIAYFSTEDKDGNAQTLKVYQAEVLPHQDKPAGTILSADKNGIQIATVDGVLNLLQLQPAGKKPMSAQDLLNGRAEWFTIGKVLA</sequence>
<dbReference type="EC" id="2.1.2.9" evidence="1"/>
<dbReference type="EMBL" id="CP000672">
    <property type="protein sequence ID" value="ABR00147.1"/>
    <property type="molecule type" value="Genomic_DNA"/>
</dbReference>
<dbReference type="SMR" id="A5UH91"/>
<dbReference type="KEGG" id="hiq:CGSHiGG_06230"/>
<dbReference type="HOGENOM" id="CLU_033347_1_2_6"/>
<dbReference type="Proteomes" id="UP000001990">
    <property type="component" value="Chromosome"/>
</dbReference>
<dbReference type="GO" id="GO:0005829">
    <property type="term" value="C:cytosol"/>
    <property type="evidence" value="ECO:0007669"/>
    <property type="project" value="TreeGrafter"/>
</dbReference>
<dbReference type="GO" id="GO:0004479">
    <property type="term" value="F:methionyl-tRNA formyltransferase activity"/>
    <property type="evidence" value="ECO:0007669"/>
    <property type="project" value="UniProtKB-UniRule"/>
</dbReference>
<dbReference type="CDD" id="cd08646">
    <property type="entry name" value="FMT_core_Met-tRNA-FMT_N"/>
    <property type="match status" value="1"/>
</dbReference>
<dbReference type="CDD" id="cd08704">
    <property type="entry name" value="Met_tRNA_FMT_C"/>
    <property type="match status" value="1"/>
</dbReference>
<dbReference type="FunFam" id="3.40.50.170:FF:000003">
    <property type="entry name" value="Methionyl-tRNA formyltransferase"/>
    <property type="match status" value="1"/>
</dbReference>
<dbReference type="Gene3D" id="3.10.25.10">
    <property type="entry name" value="Formyl transferase, C-terminal domain"/>
    <property type="match status" value="1"/>
</dbReference>
<dbReference type="Gene3D" id="3.40.50.170">
    <property type="entry name" value="Formyl transferase, N-terminal domain"/>
    <property type="match status" value="1"/>
</dbReference>
<dbReference type="HAMAP" id="MF_00182">
    <property type="entry name" value="Formyl_trans"/>
    <property type="match status" value="1"/>
</dbReference>
<dbReference type="InterPro" id="IPR005794">
    <property type="entry name" value="Fmt"/>
</dbReference>
<dbReference type="InterPro" id="IPR005793">
    <property type="entry name" value="Formyl_trans_C"/>
</dbReference>
<dbReference type="InterPro" id="IPR037022">
    <property type="entry name" value="Formyl_trans_C_sf"/>
</dbReference>
<dbReference type="InterPro" id="IPR002376">
    <property type="entry name" value="Formyl_transf_N"/>
</dbReference>
<dbReference type="InterPro" id="IPR036477">
    <property type="entry name" value="Formyl_transf_N_sf"/>
</dbReference>
<dbReference type="InterPro" id="IPR011034">
    <property type="entry name" value="Formyl_transferase-like_C_sf"/>
</dbReference>
<dbReference type="InterPro" id="IPR001555">
    <property type="entry name" value="GART_AS"/>
</dbReference>
<dbReference type="InterPro" id="IPR044135">
    <property type="entry name" value="Met-tRNA-FMT_C"/>
</dbReference>
<dbReference type="InterPro" id="IPR041711">
    <property type="entry name" value="Met-tRNA-FMT_N"/>
</dbReference>
<dbReference type="NCBIfam" id="TIGR00460">
    <property type="entry name" value="fmt"/>
    <property type="match status" value="1"/>
</dbReference>
<dbReference type="PANTHER" id="PTHR11138">
    <property type="entry name" value="METHIONYL-TRNA FORMYLTRANSFERASE"/>
    <property type="match status" value="1"/>
</dbReference>
<dbReference type="PANTHER" id="PTHR11138:SF5">
    <property type="entry name" value="METHIONYL-TRNA FORMYLTRANSFERASE, MITOCHONDRIAL"/>
    <property type="match status" value="1"/>
</dbReference>
<dbReference type="Pfam" id="PF02911">
    <property type="entry name" value="Formyl_trans_C"/>
    <property type="match status" value="1"/>
</dbReference>
<dbReference type="Pfam" id="PF00551">
    <property type="entry name" value="Formyl_trans_N"/>
    <property type="match status" value="1"/>
</dbReference>
<dbReference type="SUPFAM" id="SSF50486">
    <property type="entry name" value="FMT C-terminal domain-like"/>
    <property type="match status" value="1"/>
</dbReference>
<dbReference type="SUPFAM" id="SSF53328">
    <property type="entry name" value="Formyltransferase"/>
    <property type="match status" value="1"/>
</dbReference>
<dbReference type="PROSITE" id="PS00373">
    <property type="entry name" value="GART"/>
    <property type="match status" value="1"/>
</dbReference>
<reference key="1">
    <citation type="journal article" date="2007" name="Genome Biol.">
        <title>Characterization and modeling of the Haemophilus influenzae core and supragenomes based on the complete genomic sequences of Rd and 12 clinical nontypeable strains.</title>
        <authorList>
            <person name="Hogg J.S."/>
            <person name="Hu F.Z."/>
            <person name="Janto B."/>
            <person name="Boissy R."/>
            <person name="Hayes J."/>
            <person name="Keefe R."/>
            <person name="Post J.C."/>
            <person name="Ehrlich G.D."/>
        </authorList>
    </citation>
    <scope>NUCLEOTIDE SEQUENCE [LARGE SCALE GENOMIC DNA]</scope>
    <source>
        <strain>PittGG</strain>
    </source>
</reference>
<evidence type="ECO:0000255" key="1">
    <source>
        <dbReference type="HAMAP-Rule" id="MF_00182"/>
    </source>
</evidence>
<comment type="function">
    <text evidence="1">Attaches a formyl group to the free amino group of methionyl-tRNA(fMet). The formyl group appears to play a dual role in the initiator identity of N-formylmethionyl-tRNA by promoting its recognition by IF2 and preventing the misappropriation of this tRNA by the elongation apparatus.</text>
</comment>
<comment type="catalytic activity">
    <reaction evidence="1">
        <text>L-methionyl-tRNA(fMet) + (6R)-10-formyltetrahydrofolate = N-formyl-L-methionyl-tRNA(fMet) + (6S)-5,6,7,8-tetrahydrofolate + H(+)</text>
        <dbReference type="Rhea" id="RHEA:24380"/>
        <dbReference type="Rhea" id="RHEA-COMP:9952"/>
        <dbReference type="Rhea" id="RHEA-COMP:9953"/>
        <dbReference type="ChEBI" id="CHEBI:15378"/>
        <dbReference type="ChEBI" id="CHEBI:57453"/>
        <dbReference type="ChEBI" id="CHEBI:78530"/>
        <dbReference type="ChEBI" id="CHEBI:78844"/>
        <dbReference type="ChEBI" id="CHEBI:195366"/>
        <dbReference type="EC" id="2.1.2.9"/>
    </reaction>
</comment>
<comment type="similarity">
    <text evidence="1">Belongs to the Fmt family.</text>
</comment>
<gene>
    <name evidence="1" type="primary">fmt</name>
    <name type="ordered locus">CGSHiGG_06230</name>
</gene>
<accession>A5UH91</accession>
<organism>
    <name type="scientific">Haemophilus influenzae (strain PittGG)</name>
    <dbReference type="NCBI Taxonomy" id="374931"/>
    <lineage>
        <taxon>Bacteria</taxon>
        <taxon>Pseudomonadati</taxon>
        <taxon>Pseudomonadota</taxon>
        <taxon>Gammaproteobacteria</taxon>
        <taxon>Pasteurellales</taxon>
        <taxon>Pasteurellaceae</taxon>
        <taxon>Haemophilus</taxon>
    </lineage>
</organism>